<keyword id="KW-0004">4Fe-4S</keyword>
<keyword id="KW-0408">Iron</keyword>
<keyword id="KW-0411">Iron-sulfur</keyword>
<keyword id="KW-0456">Lyase</keyword>
<keyword id="KW-0479">Metal-binding</keyword>
<keyword id="KW-0949">S-adenosyl-L-methionine</keyword>
<keyword id="KW-0784">Thiamine biosynthesis</keyword>
<keyword id="KW-0862">Zinc</keyword>
<evidence type="ECO:0000255" key="1">
    <source>
        <dbReference type="HAMAP-Rule" id="MF_00089"/>
    </source>
</evidence>
<gene>
    <name evidence="1" type="primary">thiC</name>
    <name type="ordered locus">P9215_18851</name>
</gene>
<proteinExistence type="inferred from homology"/>
<reference key="1">
    <citation type="journal article" date="2007" name="PLoS Genet.">
        <title>Patterns and implications of gene gain and loss in the evolution of Prochlorococcus.</title>
        <authorList>
            <person name="Kettler G.C."/>
            <person name="Martiny A.C."/>
            <person name="Huang K."/>
            <person name="Zucker J."/>
            <person name="Coleman M.L."/>
            <person name="Rodrigue S."/>
            <person name="Chen F."/>
            <person name="Lapidus A."/>
            <person name="Ferriera S."/>
            <person name="Johnson J."/>
            <person name="Steglich C."/>
            <person name="Church G.M."/>
            <person name="Richardson P."/>
            <person name="Chisholm S.W."/>
        </authorList>
    </citation>
    <scope>NUCLEOTIDE SEQUENCE [LARGE SCALE GENOMIC DNA]</scope>
    <source>
        <strain>MIT 9215</strain>
    </source>
</reference>
<organism>
    <name type="scientific">Prochlorococcus marinus (strain MIT 9215)</name>
    <dbReference type="NCBI Taxonomy" id="93060"/>
    <lineage>
        <taxon>Bacteria</taxon>
        <taxon>Bacillati</taxon>
        <taxon>Cyanobacteriota</taxon>
        <taxon>Cyanophyceae</taxon>
        <taxon>Synechococcales</taxon>
        <taxon>Prochlorococcaceae</taxon>
        <taxon>Prochlorococcus</taxon>
    </lineage>
</organism>
<feature type="chain" id="PRO_1000057594" description="Phosphomethylpyrimidine synthase">
    <location>
        <begin position="1"/>
        <end position="456"/>
    </location>
</feature>
<feature type="binding site" evidence="1">
    <location>
        <position position="80"/>
    </location>
    <ligand>
        <name>substrate</name>
    </ligand>
</feature>
<feature type="binding site" evidence="1">
    <location>
        <position position="109"/>
    </location>
    <ligand>
        <name>substrate</name>
    </ligand>
</feature>
<feature type="binding site" evidence="1">
    <location>
        <position position="139"/>
    </location>
    <ligand>
        <name>substrate</name>
    </ligand>
</feature>
<feature type="binding site" evidence="1">
    <location>
        <position position="175"/>
    </location>
    <ligand>
        <name>substrate</name>
    </ligand>
</feature>
<feature type="binding site" evidence="1">
    <location>
        <begin position="195"/>
        <end position="197"/>
    </location>
    <ligand>
        <name>substrate</name>
    </ligand>
</feature>
<feature type="binding site" evidence="1">
    <location>
        <begin position="236"/>
        <end position="239"/>
    </location>
    <ligand>
        <name>substrate</name>
    </ligand>
</feature>
<feature type="binding site" evidence="1">
    <location>
        <position position="275"/>
    </location>
    <ligand>
        <name>substrate</name>
    </ligand>
</feature>
<feature type="binding site" evidence="1">
    <location>
        <position position="279"/>
    </location>
    <ligand>
        <name>Zn(2+)</name>
        <dbReference type="ChEBI" id="CHEBI:29105"/>
    </ligand>
</feature>
<feature type="binding site" evidence="1">
    <location>
        <position position="302"/>
    </location>
    <ligand>
        <name>substrate</name>
    </ligand>
</feature>
<feature type="binding site" evidence="1">
    <location>
        <position position="343"/>
    </location>
    <ligand>
        <name>Zn(2+)</name>
        <dbReference type="ChEBI" id="CHEBI:29105"/>
    </ligand>
</feature>
<feature type="binding site" evidence="1">
    <location>
        <position position="423"/>
    </location>
    <ligand>
        <name>[4Fe-4S] cluster</name>
        <dbReference type="ChEBI" id="CHEBI:49883"/>
        <note>4Fe-4S-S-AdoMet</note>
    </ligand>
</feature>
<feature type="binding site" evidence="1">
    <location>
        <position position="426"/>
    </location>
    <ligand>
        <name>[4Fe-4S] cluster</name>
        <dbReference type="ChEBI" id="CHEBI:49883"/>
        <note>4Fe-4S-S-AdoMet</note>
    </ligand>
</feature>
<feature type="binding site" evidence="1">
    <location>
        <position position="431"/>
    </location>
    <ligand>
        <name>[4Fe-4S] cluster</name>
        <dbReference type="ChEBI" id="CHEBI:49883"/>
        <note>4Fe-4S-S-AdoMet</note>
    </ligand>
</feature>
<name>THIC_PROM2</name>
<dbReference type="EC" id="4.1.99.17" evidence="1"/>
<dbReference type="EMBL" id="CP000825">
    <property type="protein sequence ID" value="ABV51498.1"/>
    <property type="molecule type" value="Genomic_DNA"/>
</dbReference>
<dbReference type="RefSeq" id="WP_012008494.1">
    <property type="nucleotide sequence ID" value="NC_009840.1"/>
</dbReference>
<dbReference type="SMR" id="A8G7B7"/>
<dbReference type="STRING" id="93060.P9215_18851"/>
<dbReference type="KEGG" id="pmh:P9215_18851"/>
<dbReference type="eggNOG" id="COG0422">
    <property type="taxonomic scope" value="Bacteria"/>
</dbReference>
<dbReference type="HOGENOM" id="CLU_013181_2_1_3"/>
<dbReference type="OrthoDB" id="9805897at2"/>
<dbReference type="UniPathway" id="UPA00060"/>
<dbReference type="Proteomes" id="UP000002014">
    <property type="component" value="Chromosome"/>
</dbReference>
<dbReference type="GO" id="GO:0005829">
    <property type="term" value="C:cytosol"/>
    <property type="evidence" value="ECO:0007669"/>
    <property type="project" value="TreeGrafter"/>
</dbReference>
<dbReference type="GO" id="GO:0051539">
    <property type="term" value="F:4 iron, 4 sulfur cluster binding"/>
    <property type="evidence" value="ECO:0007669"/>
    <property type="project" value="UniProtKB-KW"/>
</dbReference>
<dbReference type="GO" id="GO:0016830">
    <property type="term" value="F:carbon-carbon lyase activity"/>
    <property type="evidence" value="ECO:0007669"/>
    <property type="project" value="InterPro"/>
</dbReference>
<dbReference type="GO" id="GO:0008270">
    <property type="term" value="F:zinc ion binding"/>
    <property type="evidence" value="ECO:0007669"/>
    <property type="project" value="UniProtKB-UniRule"/>
</dbReference>
<dbReference type="GO" id="GO:0009228">
    <property type="term" value="P:thiamine biosynthetic process"/>
    <property type="evidence" value="ECO:0007669"/>
    <property type="project" value="UniProtKB-KW"/>
</dbReference>
<dbReference type="GO" id="GO:0009229">
    <property type="term" value="P:thiamine diphosphate biosynthetic process"/>
    <property type="evidence" value="ECO:0007669"/>
    <property type="project" value="UniProtKB-UniRule"/>
</dbReference>
<dbReference type="FunFam" id="3.20.20.540:FF:000001">
    <property type="entry name" value="Phosphomethylpyrimidine synthase"/>
    <property type="match status" value="1"/>
</dbReference>
<dbReference type="Gene3D" id="6.10.250.620">
    <property type="match status" value="1"/>
</dbReference>
<dbReference type="Gene3D" id="3.20.20.540">
    <property type="entry name" value="Radical SAM ThiC family, central domain"/>
    <property type="match status" value="1"/>
</dbReference>
<dbReference type="HAMAP" id="MF_00089">
    <property type="entry name" value="ThiC"/>
    <property type="match status" value="1"/>
</dbReference>
<dbReference type="InterPro" id="IPR037509">
    <property type="entry name" value="ThiC"/>
</dbReference>
<dbReference type="InterPro" id="IPR038521">
    <property type="entry name" value="ThiC/Bza_core_dom"/>
</dbReference>
<dbReference type="InterPro" id="IPR002817">
    <property type="entry name" value="ThiC/BzaA/B"/>
</dbReference>
<dbReference type="NCBIfam" id="NF006763">
    <property type="entry name" value="PRK09284.1"/>
    <property type="match status" value="1"/>
</dbReference>
<dbReference type="NCBIfam" id="NF009895">
    <property type="entry name" value="PRK13352.1"/>
    <property type="match status" value="1"/>
</dbReference>
<dbReference type="NCBIfam" id="TIGR00190">
    <property type="entry name" value="thiC"/>
    <property type="match status" value="1"/>
</dbReference>
<dbReference type="PANTHER" id="PTHR30557:SF1">
    <property type="entry name" value="PHOSPHOMETHYLPYRIMIDINE SYNTHASE, CHLOROPLASTIC"/>
    <property type="match status" value="1"/>
</dbReference>
<dbReference type="PANTHER" id="PTHR30557">
    <property type="entry name" value="THIAMINE BIOSYNTHESIS PROTEIN THIC"/>
    <property type="match status" value="1"/>
</dbReference>
<dbReference type="Pfam" id="PF01964">
    <property type="entry name" value="ThiC_Rad_SAM"/>
    <property type="match status" value="1"/>
</dbReference>
<dbReference type="SFLD" id="SFLDF00407">
    <property type="entry name" value="phosphomethylpyrimidine_syntha"/>
    <property type="match status" value="1"/>
</dbReference>
<dbReference type="SFLD" id="SFLDG01114">
    <property type="entry name" value="phosphomethylpyrimidine_syntha"/>
    <property type="match status" value="1"/>
</dbReference>
<dbReference type="SFLD" id="SFLDS00113">
    <property type="entry name" value="Radical_SAM_Phosphomethylpyrim"/>
    <property type="match status" value="1"/>
</dbReference>
<sequence length="456" mass="51028">MRSSWIKPRLGKNNVTQMNFARNGYLTEEMDFVAKKENLPSSLIMEEVARGRLIIPANINHLNLEPMSIGIASRCKVNANIGASPNASDINEEVEKLKLAVKYGADTVMDLSTGGVNLDEVRQAIIQESPVPIGTVPVYQALESVHGSIDRLTEDDFLHIIEKHCQQGVDYQTIHAGLLIEHLPKVKGRITGIVSRGGGILAQWMLHHFKQNPLYTRFDDICEIFKKYDCTFSLGDSLRPGCLHDASDDAQLAELKTLGELTRRAWEHNVQVMVEGPGHVPMDQIEFNVRKQMEECSEAPFYVLGPLVTDISPGYDHISSAIGAAMAGWYGTSMLCYVTPKEHLGLPNAEDVREGLIAYKIAAHAADIARHRAGARDRDDELSYARYNFDWNKQFELSLDPERAKQYHDETLPEEIFKKAEFCSMCGPKHCPMNSKISDESLDQLKDKLEECNTSA</sequence>
<accession>A8G7B7</accession>
<protein>
    <recommendedName>
        <fullName evidence="1">Phosphomethylpyrimidine synthase</fullName>
        <ecNumber evidence="1">4.1.99.17</ecNumber>
    </recommendedName>
    <alternativeName>
        <fullName evidence="1">Hydroxymethylpyrimidine phosphate synthase</fullName>
        <shortName evidence="1">HMP-P synthase</shortName>
        <shortName evidence="1">HMP-phosphate synthase</shortName>
        <shortName evidence="1">HMPP synthase</shortName>
    </alternativeName>
    <alternativeName>
        <fullName evidence="1">Thiamine biosynthesis protein ThiC</fullName>
    </alternativeName>
</protein>
<comment type="function">
    <text evidence="1">Catalyzes the synthesis of the hydroxymethylpyrimidine phosphate (HMP-P) moiety of thiamine from aminoimidazole ribotide (AIR) in a radical S-adenosyl-L-methionine (SAM)-dependent reaction.</text>
</comment>
<comment type="catalytic activity">
    <reaction evidence="1">
        <text>5-amino-1-(5-phospho-beta-D-ribosyl)imidazole + S-adenosyl-L-methionine = 4-amino-2-methyl-5-(phosphooxymethyl)pyrimidine + CO + 5'-deoxyadenosine + formate + L-methionine + 3 H(+)</text>
        <dbReference type="Rhea" id="RHEA:24840"/>
        <dbReference type="ChEBI" id="CHEBI:15378"/>
        <dbReference type="ChEBI" id="CHEBI:15740"/>
        <dbReference type="ChEBI" id="CHEBI:17245"/>
        <dbReference type="ChEBI" id="CHEBI:17319"/>
        <dbReference type="ChEBI" id="CHEBI:57844"/>
        <dbReference type="ChEBI" id="CHEBI:58354"/>
        <dbReference type="ChEBI" id="CHEBI:59789"/>
        <dbReference type="ChEBI" id="CHEBI:137981"/>
        <dbReference type="EC" id="4.1.99.17"/>
    </reaction>
</comment>
<comment type="cofactor">
    <cofactor evidence="1">
        <name>[4Fe-4S] cluster</name>
        <dbReference type="ChEBI" id="CHEBI:49883"/>
    </cofactor>
    <text evidence="1">Binds 1 [4Fe-4S] cluster per subunit. The cluster is coordinated with 3 cysteines and an exchangeable S-adenosyl-L-methionine.</text>
</comment>
<comment type="pathway">
    <text evidence="1">Cofactor biosynthesis; thiamine diphosphate biosynthesis.</text>
</comment>
<comment type="similarity">
    <text evidence="1">Belongs to the ThiC family.</text>
</comment>